<reference key="1">
    <citation type="journal article" date="2002" name="C. R. Biol.">
        <title>Higher-level relationships of snakes inferred from four nuclear and mitochondrial genes.</title>
        <authorList>
            <person name="Vidal N."/>
            <person name="Hedges S.B."/>
        </authorList>
    </citation>
    <scope>NUCLEOTIDE SEQUENCE [GENOMIC DNA]</scope>
</reference>
<proteinExistence type="inferred from homology"/>
<gene>
    <name type="primary">MOS</name>
</gene>
<evidence type="ECO:0000255" key="1">
    <source>
        <dbReference type="PROSITE-ProRule" id="PRU00159"/>
    </source>
</evidence>
<evidence type="ECO:0000255" key="2">
    <source>
        <dbReference type="PROSITE-ProRule" id="PRU10027"/>
    </source>
</evidence>
<keyword id="KW-0067">ATP-binding</keyword>
<keyword id="KW-0418">Kinase</keyword>
<keyword id="KW-0547">Nucleotide-binding</keyword>
<keyword id="KW-0723">Serine/threonine-protein kinase</keyword>
<keyword id="KW-0808">Transferase</keyword>
<accession>Q8AX02</accession>
<dbReference type="EC" id="2.7.11.1"/>
<dbReference type="EMBL" id="AF544734">
    <property type="protein sequence ID" value="AAO13457.1"/>
    <property type="molecule type" value="Genomic_DNA"/>
</dbReference>
<dbReference type="SMR" id="Q8AX02"/>
<dbReference type="GO" id="GO:0005524">
    <property type="term" value="F:ATP binding"/>
    <property type="evidence" value="ECO:0007669"/>
    <property type="project" value="UniProtKB-KW"/>
</dbReference>
<dbReference type="GO" id="GO:0106310">
    <property type="term" value="F:protein serine kinase activity"/>
    <property type="evidence" value="ECO:0007669"/>
    <property type="project" value="RHEA"/>
</dbReference>
<dbReference type="GO" id="GO:0004674">
    <property type="term" value="F:protein serine/threonine kinase activity"/>
    <property type="evidence" value="ECO:0007669"/>
    <property type="project" value="UniProtKB-KW"/>
</dbReference>
<dbReference type="FunFam" id="3.30.200.20:FF:000316">
    <property type="entry name" value="Proto-oncogene serine/threonine-protein kinase mos"/>
    <property type="match status" value="1"/>
</dbReference>
<dbReference type="Gene3D" id="3.30.200.20">
    <property type="entry name" value="Phosphorylase Kinase, domain 1"/>
    <property type="match status" value="1"/>
</dbReference>
<dbReference type="Gene3D" id="1.10.510.10">
    <property type="entry name" value="Transferase(Phosphotransferase) domain 1"/>
    <property type="match status" value="1"/>
</dbReference>
<dbReference type="InterPro" id="IPR011009">
    <property type="entry name" value="Kinase-like_dom_sf"/>
</dbReference>
<dbReference type="InterPro" id="IPR000719">
    <property type="entry name" value="Prot_kinase_dom"/>
</dbReference>
<dbReference type="InterPro" id="IPR017441">
    <property type="entry name" value="Protein_kinase_ATP_BS"/>
</dbReference>
<dbReference type="InterPro" id="IPR051681">
    <property type="entry name" value="Ser/Thr_Kinases-Pseudokinases"/>
</dbReference>
<dbReference type="PANTHER" id="PTHR44329">
    <property type="entry name" value="SERINE/THREONINE-PROTEIN KINASE TNNI3K-RELATED"/>
    <property type="match status" value="1"/>
</dbReference>
<dbReference type="PANTHER" id="PTHR44329:SF285">
    <property type="entry name" value="V-MOS MOLONEY MURINE SARCOMA VIRAL ONCO HOMOLOG"/>
    <property type="match status" value="1"/>
</dbReference>
<dbReference type="Pfam" id="PF00069">
    <property type="entry name" value="Pkinase"/>
    <property type="match status" value="1"/>
</dbReference>
<dbReference type="SMART" id="SM00220">
    <property type="entry name" value="S_TKc"/>
    <property type="match status" value="1"/>
</dbReference>
<dbReference type="SUPFAM" id="SSF56112">
    <property type="entry name" value="Protein kinase-like (PK-like)"/>
    <property type="match status" value="1"/>
</dbReference>
<dbReference type="PROSITE" id="PS00107">
    <property type="entry name" value="PROTEIN_KINASE_ATP"/>
    <property type="match status" value="1"/>
</dbReference>
<dbReference type="PROSITE" id="PS50011">
    <property type="entry name" value="PROTEIN_KINASE_DOM"/>
    <property type="match status" value="1"/>
</dbReference>
<name>MOS_ATHSQ</name>
<protein>
    <recommendedName>
        <fullName>Serine/threonine-protein kinase mos</fullName>
        <ecNumber>2.7.11.1</ecNumber>
    </recommendedName>
    <alternativeName>
        <fullName>Oocyte maturation factor mos</fullName>
    </alternativeName>
</protein>
<feature type="chain" id="PRO_0000086350" description="Serine/threonine-protein kinase mos">
    <location>
        <begin position="1" status="less than"/>
        <end position="194" status="greater than"/>
    </location>
</feature>
<feature type="domain" description="Protein kinase" evidence="1">
    <location>
        <begin position="47"/>
        <end position="194" status="greater than"/>
    </location>
</feature>
<feature type="active site" description="Proton acceptor" evidence="1 2">
    <location>
        <position position="187"/>
    </location>
</feature>
<feature type="binding site" evidence="1">
    <location>
        <begin position="53"/>
        <end position="61"/>
    </location>
    <ligand>
        <name>ATP</name>
        <dbReference type="ChEBI" id="CHEBI:30616"/>
    </ligand>
</feature>
<feature type="binding site" evidence="1">
    <location>
        <position position="74"/>
    </location>
    <ligand>
        <name>ATP</name>
        <dbReference type="ChEBI" id="CHEBI:30616"/>
    </ligand>
</feature>
<feature type="non-terminal residue">
    <location>
        <position position="1"/>
    </location>
</feature>
<feature type="non-terminal residue">
    <location>
        <position position="194"/>
    </location>
</feature>
<comment type="catalytic activity">
    <reaction>
        <text>L-seryl-[protein] + ATP = O-phospho-L-seryl-[protein] + ADP + H(+)</text>
        <dbReference type="Rhea" id="RHEA:17989"/>
        <dbReference type="Rhea" id="RHEA-COMP:9863"/>
        <dbReference type="Rhea" id="RHEA-COMP:11604"/>
        <dbReference type="ChEBI" id="CHEBI:15378"/>
        <dbReference type="ChEBI" id="CHEBI:29999"/>
        <dbReference type="ChEBI" id="CHEBI:30616"/>
        <dbReference type="ChEBI" id="CHEBI:83421"/>
        <dbReference type="ChEBI" id="CHEBI:456216"/>
        <dbReference type="EC" id="2.7.11.1"/>
    </reaction>
</comment>
<comment type="catalytic activity">
    <reaction>
        <text>L-threonyl-[protein] + ATP = O-phospho-L-threonyl-[protein] + ADP + H(+)</text>
        <dbReference type="Rhea" id="RHEA:46608"/>
        <dbReference type="Rhea" id="RHEA-COMP:11060"/>
        <dbReference type="Rhea" id="RHEA-COMP:11605"/>
        <dbReference type="ChEBI" id="CHEBI:15378"/>
        <dbReference type="ChEBI" id="CHEBI:30013"/>
        <dbReference type="ChEBI" id="CHEBI:30616"/>
        <dbReference type="ChEBI" id="CHEBI:61977"/>
        <dbReference type="ChEBI" id="CHEBI:456216"/>
        <dbReference type="EC" id="2.7.11.1"/>
    </reaction>
</comment>
<comment type="similarity">
    <text evidence="1">Belongs to the protein kinase superfamily. Ser/Thr protein kinase family.</text>
</comment>
<organism>
    <name type="scientific">Atheris squamigera</name>
    <name type="common">Variable bush viper</name>
    <dbReference type="NCBI Taxonomy" id="110225"/>
    <lineage>
        <taxon>Eukaryota</taxon>
        <taxon>Metazoa</taxon>
        <taxon>Chordata</taxon>
        <taxon>Craniata</taxon>
        <taxon>Vertebrata</taxon>
        <taxon>Euteleostomi</taxon>
        <taxon>Lepidosauria</taxon>
        <taxon>Squamata</taxon>
        <taxon>Bifurcata</taxon>
        <taxon>Unidentata</taxon>
        <taxon>Episquamata</taxon>
        <taxon>Toxicofera</taxon>
        <taxon>Serpentes</taxon>
        <taxon>Colubroidea</taxon>
        <taxon>Viperidae</taxon>
        <taxon>Viperinae</taxon>
        <taxon>Atheris</taxon>
    </lineage>
</organism>
<sequence length="194" mass="21001">SSVNARPCSSPLVCPAKGENFFGVGNVARIRRLPPHLAWCSIDWDQLCLLHLLGSGGFGSVYKAIYHGATVAVKKVKRCSKNHLASRQSFWAELNVARLGHNNVVRIVAASTCTPASQDSLGTIIMEYAGNCTLHHVIYGTGYLTGNNSDSLKCDHGFLSTAQAVIYSHDIVAGLMFLHSQLIVHLDLKPANIF</sequence>